<gene>
    <name type="primary">selB</name>
</gene>
<reference key="1">
    <citation type="journal article" date="1996" name="J. Mol. Biol.">
        <title>Domain structure of the prokaryotic selenocysteine-specific elongation factor SelB.</title>
        <authorList>
            <person name="Kromayer M."/>
            <person name="Wilting R."/>
            <person name="Tormay P."/>
            <person name="Boeck A."/>
        </authorList>
    </citation>
    <scope>NUCLEOTIDE SEQUENCE [GENOMIC DNA]</scope>
    <source>
        <strain>DSM 1743</strain>
    </source>
</reference>
<sequence>MPVIMGTAGHIDHGKTSLIKALTGINCDRLAEEQKRGITIELGFAYLDLTPEVRLGIIDVPGHERFVKNMVSGAAGIDFVLLVIAADEGIMPQTREHLEICSLLGIRAGLVALTKTDMVEEDWLELVHEEVQTYLAGSFLEGAPIVPVSAHTGAGLEELKGYIAELSSTFAPDRRSDLFRLPVDRVFTMKGHGTVVTGTSISGALRLGEEIEIVPSGHRSKVRGLQVHGTAAEVARAGERTAVNLYGLEVAELERGEVLAHPQTLFPSPVWDVEMTCLSSSPNPLKHRTEVHFHHGSREILAKLFFLDRDKLEPGETAVCQVRFPRPLPGVYGDRCIVRSFSPLQTVAGGRIINPLGRKVRRHSKDMETLSTLGAATGEELLLAQLRLAGRGGLTVAELRIMTDMESKLLDKTLQILGGKQLAFQFDRDDKRFVGADVLDGLAGACLEYLGEYHRREPMRQGLSRAELISGFGRGMHPKLVHFLVERLVKSGQVLLEADILRLPGHVVSLASDQSGLRTLMETTYVQAGLMPPTTKAFLEENGLTAKDVAQMFRLLMEEGVLIKVSEEFYYAKTAMDEIIGRVRSFFESNQEMGPQDFRDLTELTRKFAIPVLEYLDKEKITMRIGDKRQIRKR</sequence>
<dbReference type="EMBL" id="X99911">
    <property type="protein sequence ID" value="CAA68184.1"/>
    <property type="molecule type" value="Genomic_DNA"/>
</dbReference>
<dbReference type="SMR" id="Q46497"/>
<dbReference type="GO" id="GO:0005829">
    <property type="term" value="C:cytosol"/>
    <property type="evidence" value="ECO:0007669"/>
    <property type="project" value="TreeGrafter"/>
</dbReference>
<dbReference type="GO" id="GO:0005525">
    <property type="term" value="F:GTP binding"/>
    <property type="evidence" value="ECO:0007669"/>
    <property type="project" value="UniProtKB-KW"/>
</dbReference>
<dbReference type="GO" id="GO:0003924">
    <property type="term" value="F:GTPase activity"/>
    <property type="evidence" value="ECO:0007669"/>
    <property type="project" value="InterPro"/>
</dbReference>
<dbReference type="GO" id="GO:0003723">
    <property type="term" value="F:RNA binding"/>
    <property type="evidence" value="ECO:0007669"/>
    <property type="project" value="InterPro"/>
</dbReference>
<dbReference type="GO" id="GO:0003746">
    <property type="term" value="F:translation elongation factor activity"/>
    <property type="evidence" value="ECO:0007669"/>
    <property type="project" value="InterPro"/>
</dbReference>
<dbReference type="GO" id="GO:0001514">
    <property type="term" value="P:selenocysteine incorporation"/>
    <property type="evidence" value="ECO:0007669"/>
    <property type="project" value="InterPro"/>
</dbReference>
<dbReference type="CDD" id="cd04171">
    <property type="entry name" value="SelB"/>
    <property type="match status" value="1"/>
</dbReference>
<dbReference type="CDD" id="cd03696">
    <property type="entry name" value="SelB_II"/>
    <property type="match status" value="1"/>
</dbReference>
<dbReference type="CDD" id="cd15491">
    <property type="entry name" value="selB_III"/>
    <property type="match status" value="1"/>
</dbReference>
<dbReference type="FunFam" id="3.40.50.300:FF:001064">
    <property type="entry name" value="Selenocysteine-specific translation elongation factor"/>
    <property type="match status" value="1"/>
</dbReference>
<dbReference type="Gene3D" id="1.10.10.2770">
    <property type="match status" value="1"/>
</dbReference>
<dbReference type="Gene3D" id="3.40.50.300">
    <property type="entry name" value="P-loop containing nucleotide triphosphate hydrolases"/>
    <property type="match status" value="1"/>
</dbReference>
<dbReference type="Gene3D" id="2.40.30.10">
    <property type="entry name" value="Translation factors"/>
    <property type="match status" value="1"/>
</dbReference>
<dbReference type="Gene3D" id="1.10.10.10">
    <property type="entry name" value="Winged helix-like DNA-binding domain superfamily/Winged helix DNA-binding domain"/>
    <property type="match status" value="1"/>
</dbReference>
<dbReference type="InterPro" id="IPR050055">
    <property type="entry name" value="EF-Tu_GTPase"/>
</dbReference>
<dbReference type="InterPro" id="IPR004161">
    <property type="entry name" value="EFTu-like_2"/>
</dbReference>
<dbReference type="InterPro" id="IPR015190">
    <property type="entry name" value="Elong_fac_SelB-wing-hlx_typ-2"/>
</dbReference>
<dbReference type="InterPro" id="IPR031157">
    <property type="entry name" value="G_TR_CS"/>
</dbReference>
<dbReference type="InterPro" id="IPR027417">
    <property type="entry name" value="P-loop_NTPase"/>
</dbReference>
<dbReference type="InterPro" id="IPR015191">
    <property type="entry name" value="SelB_WHD4"/>
</dbReference>
<dbReference type="InterPro" id="IPR005225">
    <property type="entry name" value="Small_GTP-bd"/>
</dbReference>
<dbReference type="InterPro" id="IPR000795">
    <property type="entry name" value="T_Tr_GTP-bd_dom"/>
</dbReference>
<dbReference type="InterPro" id="IPR009000">
    <property type="entry name" value="Transl_B-barrel_sf"/>
</dbReference>
<dbReference type="InterPro" id="IPR009001">
    <property type="entry name" value="Transl_elong_EF1A/Init_IF2_C"/>
</dbReference>
<dbReference type="InterPro" id="IPR004535">
    <property type="entry name" value="Transl_elong_SelB"/>
</dbReference>
<dbReference type="InterPro" id="IPR036388">
    <property type="entry name" value="WH-like_DNA-bd_sf"/>
</dbReference>
<dbReference type="InterPro" id="IPR036390">
    <property type="entry name" value="WH_DNA-bd_sf"/>
</dbReference>
<dbReference type="NCBIfam" id="TIGR00475">
    <property type="entry name" value="selB"/>
    <property type="match status" value="1"/>
</dbReference>
<dbReference type="NCBIfam" id="TIGR00231">
    <property type="entry name" value="small_GTP"/>
    <property type="match status" value="1"/>
</dbReference>
<dbReference type="PANTHER" id="PTHR43721:SF22">
    <property type="entry name" value="ELONGATION FACTOR TU, MITOCHONDRIAL"/>
    <property type="match status" value="1"/>
</dbReference>
<dbReference type="PANTHER" id="PTHR43721">
    <property type="entry name" value="ELONGATION FACTOR TU-RELATED"/>
    <property type="match status" value="1"/>
</dbReference>
<dbReference type="Pfam" id="PF25461">
    <property type="entry name" value="Beta-barrel_SelB"/>
    <property type="match status" value="1"/>
</dbReference>
<dbReference type="Pfam" id="PF00009">
    <property type="entry name" value="GTP_EFTU"/>
    <property type="match status" value="1"/>
</dbReference>
<dbReference type="Pfam" id="PF03144">
    <property type="entry name" value="GTP_EFTU_D2"/>
    <property type="match status" value="1"/>
</dbReference>
<dbReference type="Pfam" id="PF09106">
    <property type="entry name" value="SelB-wing_2"/>
    <property type="match status" value="1"/>
</dbReference>
<dbReference type="Pfam" id="PF09107">
    <property type="entry name" value="SelB-wing_3"/>
    <property type="match status" value="1"/>
</dbReference>
<dbReference type="PRINTS" id="PR00315">
    <property type="entry name" value="ELONGATNFCT"/>
</dbReference>
<dbReference type="SUPFAM" id="SSF50465">
    <property type="entry name" value="EF-Tu/eEF-1alpha/eIF2-gamma C-terminal domain"/>
    <property type="match status" value="1"/>
</dbReference>
<dbReference type="SUPFAM" id="SSF52540">
    <property type="entry name" value="P-loop containing nucleoside triphosphate hydrolases"/>
    <property type="match status" value="1"/>
</dbReference>
<dbReference type="SUPFAM" id="SSF50447">
    <property type="entry name" value="Translation proteins"/>
    <property type="match status" value="1"/>
</dbReference>
<dbReference type="SUPFAM" id="SSF46785">
    <property type="entry name" value="Winged helix' DNA-binding domain"/>
    <property type="match status" value="3"/>
</dbReference>
<dbReference type="PROSITE" id="PS00301">
    <property type="entry name" value="G_TR_1"/>
    <property type="match status" value="1"/>
</dbReference>
<dbReference type="PROSITE" id="PS51722">
    <property type="entry name" value="G_TR_2"/>
    <property type="match status" value="1"/>
</dbReference>
<organism>
    <name type="scientific">Desulfomicrobium baculatum</name>
    <name type="common">Desulfovibrio baculatus</name>
    <dbReference type="NCBI Taxonomy" id="899"/>
    <lineage>
        <taxon>Bacteria</taxon>
        <taxon>Pseudomonadati</taxon>
        <taxon>Thermodesulfobacteriota</taxon>
        <taxon>Desulfovibrionia</taxon>
        <taxon>Desulfovibrionales</taxon>
        <taxon>Desulfomicrobiaceae</taxon>
        <taxon>Desulfomicrobium</taxon>
    </lineage>
</organism>
<comment type="function">
    <text>Translation factor necessary for the incorporation of selenocysteine into proteins. It probably replaces EF-Tu for the insertion of selenocysteine directed by the UGA codon. SelB binds GTP and GDP.</text>
</comment>
<comment type="subcellular location">
    <subcellularLocation>
        <location>Cytoplasm</location>
    </subcellularLocation>
</comment>
<comment type="similarity">
    <text evidence="2">Belongs to the TRAFAC class translation factor GTPase superfamily. Classic translation factor GTPase family. SelB subfamily.</text>
</comment>
<name>SELB_DESBA</name>
<evidence type="ECO:0000250" key="1"/>
<evidence type="ECO:0000255" key="2">
    <source>
        <dbReference type="PROSITE-ProRule" id="PRU01059"/>
    </source>
</evidence>
<feature type="chain" id="PRO_0000091473" description="Selenocysteine-specific elongation factor">
    <location>
        <begin position="1"/>
        <end position="634"/>
    </location>
</feature>
<feature type="domain" description="tr-type G" evidence="2">
    <location>
        <begin position="1"/>
        <end position="173"/>
    </location>
</feature>
<feature type="region of interest" description="G1" evidence="2">
    <location>
        <begin position="9"/>
        <end position="16"/>
    </location>
</feature>
<feature type="region of interest" description="G2" evidence="2">
    <location>
        <begin position="37"/>
        <end position="41"/>
    </location>
</feature>
<feature type="region of interest" description="G3" evidence="2">
    <location>
        <begin position="59"/>
        <end position="62"/>
    </location>
</feature>
<feature type="region of interest" description="G4" evidence="2">
    <location>
        <begin position="114"/>
        <end position="117"/>
    </location>
</feature>
<feature type="region of interest" description="G5" evidence="2">
    <location>
        <begin position="149"/>
        <end position="151"/>
    </location>
</feature>
<feature type="binding site" evidence="1">
    <location>
        <begin position="9"/>
        <end position="16"/>
    </location>
    <ligand>
        <name>GTP</name>
        <dbReference type="ChEBI" id="CHEBI:37565"/>
    </ligand>
</feature>
<feature type="binding site" evidence="1">
    <location>
        <begin position="59"/>
        <end position="63"/>
    </location>
    <ligand>
        <name>GTP</name>
        <dbReference type="ChEBI" id="CHEBI:37565"/>
    </ligand>
</feature>
<feature type="binding site" evidence="1">
    <location>
        <begin position="114"/>
        <end position="117"/>
    </location>
    <ligand>
        <name>GTP</name>
        <dbReference type="ChEBI" id="CHEBI:37565"/>
    </ligand>
</feature>
<proteinExistence type="inferred from homology"/>
<protein>
    <recommendedName>
        <fullName>Selenocysteine-specific elongation factor</fullName>
    </recommendedName>
    <alternativeName>
        <fullName>SelB translation factor</fullName>
    </alternativeName>
</protein>
<keyword id="KW-0963">Cytoplasm</keyword>
<keyword id="KW-0342">GTP-binding</keyword>
<keyword id="KW-0547">Nucleotide-binding</keyword>
<keyword id="KW-0648">Protein biosynthesis</keyword>
<accession>Q46497</accession>